<protein>
    <recommendedName>
        <fullName evidence="1">Cytidylate kinase</fullName>
        <shortName evidence="1">CK</shortName>
        <ecNumber evidence="1">2.7.4.25</ecNumber>
    </recommendedName>
    <alternativeName>
        <fullName evidence="1">Cytidine monophosphate kinase</fullName>
        <shortName evidence="1">CMP kinase</shortName>
    </alternativeName>
</protein>
<reference key="1">
    <citation type="journal article" date="2008" name="J. Bacteriol.">
        <title>Genome sequence of the streptomycin-producing microorganism Streptomyces griseus IFO 13350.</title>
        <authorList>
            <person name="Ohnishi Y."/>
            <person name="Ishikawa J."/>
            <person name="Hara H."/>
            <person name="Suzuki H."/>
            <person name="Ikenoya M."/>
            <person name="Ikeda H."/>
            <person name="Yamashita A."/>
            <person name="Hattori M."/>
            <person name="Horinouchi S."/>
        </authorList>
    </citation>
    <scope>NUCLEOTIDE SEQUENCE [LARGE SCALE GENOMIC DNA]</scope>
    <source>
        <strain>JCM 4626 / CBS 651.72 / NBRC 13350 / KCC S-0626 / ISP 5235</strain>
    </source>
</reference>
<accession>B1W221</accession>
<comment type="catalytic activity">
    <reaction evidence="1">
        <text>CMP + ATP = CDP + ADP</text>
        <dbReference type="Rhea" id="RHEA:11600"/>
        <dbReference type="ChEBI" id="CHEBI:30616"/>
        <dbReference type="ChEBI" id="CHEBI:58069"/>
        <dbReference type="ChEBI" id="CHEBI:60377"/>
        <dbReference type="ChEBI" id="CHEBI:456216"/>
        <dbReference type="EC" id="2.7.4.25"/>
    </reaction>
</comment>
<comment type="catalytic activity">
    <reaction evidence="1">
        <text>dCMP + ATP = dCDP + ADP</text>
        <dbReference type="Rhea" id="RHEA:25094"/>
        <dbReference type="ChEBI" id="CHEBI:30616"/>
        <dbReference type="ChEBI" id="CHEBI:57566"/>
        <dbReference type="ChEBI" id="CHEBI:58593"/>
        <dbReference type="ChEBI" id="CHEBI:456216"/>
        <dbReference type="EC" id="2.7.4.25"/>
    </reaction>
</comment>
<comment type="subcellular location">
    <subcellularLocation>
        <location evidence="1">Cytoplasm</location>
    </subcellularLocation>
</comment>
<comment type="similarity">
    <text evidence="1">Belongs to the cytidylate kinase family. Type 1 subfamily.</text>
</comment>
<gene>
    <name evidence="1" type="primary">cmk</name>
    <name type="ordered locus">SGR_5739</name>
</gene>
<dbReference type="EC" id="2.7.4.25" evidence="1"/>
<dbReference type="EMBL" id="AP009493">
    <property type="protein sequence ID" value="BAG22568.1"/>
    <property type="molecule type" value="Genomic_DNA"/>
</dbReference>
<dbReference type="RefSeq" id="WP_012381501.1">
    <property type="nucleotide sequence ID" value="NC_010572.1"/>
</dbReference>
<dbReference type="SMR" id="B1W221"/>
<dbReference type="KEGG" id="sgr:SGR_5739"/>
<dbReference type="PATRIC" id="fig|455632.4.peg.5878"/>
<dbReference type="eggNOG" id="COG0283">
    <property type="taxonomic scope" value="Bacteria"/>
</dbReference>
<dbReference type="HOGENOM" id="CLU_079959_0_0_11"/>
<dbReference type="Proteomes" id="UP000001685">
    <property type="component" value="Chromosome"/>
</dbReference>
<dbReference type="GO" id="GO:0005829">
    <property type="term" value="C:cytosol"/>
    <property type="evidence" value="ECO:0007669"/>
    <property type="project" value="TreeGrafter"/>
</dbReference>
<dbReference type="GO" id="GO:0005524">
    <property type="term" value="F:ATP binding"/>
    <property type="evidence" value="ECO:0007669"/>
    <property type="project" value="UniProtKB-UniRule"/>
</dbReference>
<dbReference type="GO" id="GO:0036430">
    <property type="term" value="F:CMP kinase activity"/>
    <property type="evidence" value="ECO:0007669"/>
    <property type="project" value="RHEA"/>
</dbReference>
<dbReference type="GO" id="GO:0036431">
    <property type="term" value="F:dCMP kinase activity"/>
    <property type="evidence" value="ECO:0007669"/>
    <property type="project" value="RHEA"/>
</dbReference>
<dbReference type="GO" id="GO:0015949">
    <property type="term" value="P:nucleobase-containing small molecule interconversion"/>
    <property type="evidence" value="ECO:0007669"/>
    <property type="project" value="TreeGrafter"/>
</dbReference>
<dbReference type="GO" id="GO:0006220">
    <property type="term" value="P:pyrimidine nucleotide metabolic process"/>
    <property type="evidence" value="ECO:0007669"/>
    <property type="project" value="UniProtKB-UniRule"/>
</dbReference>
<dbReference type="CDD" id="cd02020">
    <property type="entry name" value="CMPK"/>
    <property type="match status" value="1"/>
</dbReference>
<dbReference type="Gene3D" id="3.40.50.300">
    <property type="entry name" value="P-loop containing nucleotide triphosphate hydrolases"/>
    <property type="match status" value="1"/>
</dbReference>
<dbReference type="HAMAP" id="MF_00238">
    <property type="entry name" value="Cytidyl_kinase_type1"/>
    <property type="match status" value="1"/>
</dbReference>
<dbReference type="InterPro" id="IPR003136">
    <property type="entry name" value="Cytidylate_kin"/>
</dbReference>
<dbReference type="InterPro" id="IPR011994">
    <property type="entry name" value="Cytidylate_kinase_dom"/>
</dbReference>
<dbReference type="InterPro" id="IPR027417">
    <property type="entry name" value="P-loop_NTPase"/>
</dbReference>
<dbReference type="NCBIfam" id="TIGR00017">
    <property type="entry name" value="cmk"/>
    <property type="match status" value="1"/>
</dbReference>
<dbReference type="PANTHER" id="PTHR21299:SF2">
    <property type="entry name" value="CYTIDYLATE KINASE"/>
    <property type="match status" value="1"/>
</dbReference>
<dbReference type="PANTHER" id="PTHR21299">
    <property type="entry name" value="CYTIDYLATE KINASE/PANTOATE-BETA-ALANINE LIGASE"/>
    <property type="match status" value="1"/>
</dbReference>
<dbReference type="Pfam" id="PF02224">
    <property type="entry name" value="Cytidylate_kin"/>
    <property type="match status" value="1"/>
</dbReference>
<dbReference type="SUPFAM" id="SSF52540">
    <property type="entry name" value="P-loop containing nucleoside triphosphate hydrolases"/>
    <property type="match status" value="1"/>
</dbReference>
<proteinExistence type="inferred from homology"/>
<sequence length="231" mass="23689">MSTTVETARSSVIVAIDGPSGTGKSSTSKAVAAKLGLSYLDTGAQYRAITWWMLTNGVDVGNPEEIATAAAKPVIVSGTDPAAPTITVDGEDASGPIRTQEVTSKVSAVSAVPEVRTLITALQRSIAAAATGGIVVEGRDIGTTVLPDADLKIFLTASPEARAARRSGEVKGSDLSATREALIKRDAADSGRKTSPLAKADDAVEVDTTELTLQQVIECVVTLVEGKRVAA</sequence>
<name>KCY_STRGG</name>
<organism>
    <name type="scientific">Streptomyces griseus subsp. griseus (strain JCM 4626 / CBS 651.72 / NBRC 13350 / KCC S-0626 / ISP 5235)</name>
    <dbReference type="NCBI Taxonomy" id="455632"/>
    <lineage>
        <taxon>Bacteria</taxon>
        <taxon>Bacillati</taxon>
        <taxon>Actinomycetota</taxon>
        <taxon>Actinomycetes</taxon>
        <taxon>Kitasatosporales</taxon>
        <taxon>Streptomycetaceae</taxon>
        <taxon>Streptomyces</taxon>
    </lineage>
</organism>
<keyword id="KW-0067">ATP-binding</keyword>
<keyword id="KW-0963">Cytoplasm</keyword>
<keyword id="KW-0418">Kinase</keyword>
<keyword id="KW-0547">Nucleotide-binding</keyword>
<keyword id="KW-0808">Transferase</keyword>
<evidence type="ECO:0000255" key="1">
    <source>
        <dbReference type="HAMAP-Rule" id="MF_00238"/>
    </source>
</evidence>
<feature type="chain" id="PRO_1000100690" description="Cytidylate kinase">
    <location>
        <begin position="1"/>
        <end position="231"/>
    </location>
</feature>
<feature type="binding site" evidence="1">
    <location>
        <begin position="18"/>
        <end position="26"/>
    </location>
    <ligand>
        <name>ATP</name>
        <dbReference type="ChEBI" id="CHEBI:30616"/>
    </ligand>
</feature>